<proteinExistence type="inferred from homology"/>
<evidence type="ECO:0000255" key="1">
    <source>
        <dbReference type="HAMAP-Rule" id="MF_00071"/>
    </source>
</evidence>
<comment type="function">
    <text evidence="1">Required for accurate and efficient protein synthesis under certain stress conditions. May act as a fidelity factor of the translation reaction, by catalyzing a one-codon backward translocation of tRNAs on improperly translocated ribosomes. Back-translocation proceeds from a post-translocation (POST) complex to a pre-translocation (PRE) complex, thus giving elongation factor G a second chance to translocate the tRNAs correctly. Binds to ribosomes in a GTP-dependent manner.</text>
</comment>
<comment type="catalytic activity">
    <reaction evidence="1">
        <text>GTP + H2O = GDP + phosphate + H(+)</text>
        <dbReference type="Rhea" id="RHEA:19669"/>
        <dbReference type="ChEBI" id="CHEBI:15377"/>
        <dbReference type="ChEBI" id="CHEBI:15378"/>
        <dbReference type="ChEBI" id="CHEBI:37565"/>
        <dbReference type="ChEBI" id="CHEBI:43474"/>
        <dbReference type="ChEBI" id="CHEBI:58189"/>
        <dbReference type="EC" id="3.6.5.n1"/>
    </reaction>
</comment>
<comment type="subcellular location">
    <subcellularLocation>
        <location evidence="1">Cell inner membrane</location>
        <topology evidence="1">Peripheral membrane protein</topology>
        <orientation evidence="1">Cytoplasmic side</orientation>
    </subcellularLocation>
</comment>
<comment type="similarity">
    <text evidence="1">Belongs to the TRAFAC class translation factor GTPase superfamily. Classic translation factor GTPase family. LepA subfamily.</text>
</comment>
<gene>
    <name evidence="1" type="primary">lepA</name>
    <name type="ordered locus">ECDH10B_2737</name>
</gene>
<keyword id="KW-0997">Cell inner membrane</keyword>
<keyword id="KW-1003">Cell membrane</keyword>
<keyword id="KW-0342">GTP-binding</keyword>
<keyword id="KW-0378">Hydrolase</keyword>
<keyword id="KW-0472">Membrane</keyword>
<keyword id="KW-0547">Nucleotide-binding</keyword>
<keyword id="KW-0648">Protein biosynthesis</keyword>
<organism>
    <name type="scientific">Escherichia coli (strain K12 / DH10B)</name>
    <dbReference type="NCBI Taxonomy" id="316385"/>
    <lineage>
        <taxon>Bacteria</taxon>
        <taxon>Pseudomonadati</taxon>
        <taxon>Pseudomonadota</taxon>
        <taxon>Gammaproteobacteria</taxon>
        <taxon>Enterobacterales</taxon>
        <taxon>Enterobacteriaceae</taxon>
        <taxon>Escherichia</taxon>
    </lineage>
</organism>
<accession>B1XB43</accession>
<reference key="1">
    <citation type="journal article" date="2008" name="J. Bacteriol.">
        <title>The complete genome sequence of Escherichia coli DH10B: insights into the biology of a laboratory workhorse.</title>
        <authorList>
            <person name="Durfee T."/>
            <person name="Nelson R."/>
            <person name="Baldwin S."/>
            <person name="Plunkett G. III"/>
            <person name="Burland V."/>
            <person name="Mau B."/>
            <person name="Petrosino J.F."/>
            <person name="Qin X."/>
            <person name="Muzny D.M."/>
            <person name="Ayele M."/>
            <person name="Gibbs R.A."/>
            <person name="Csorgo B."/>
            <person name="Posfai G."/>
            <person name="Weinstock G.M."/>
            <person name="Blattner F.R."/>
        </authorList>
    </citation>
    <scope>NUCLEOTIDE SEQUENCE [LARGE SCALE GENOMIC DNA]</scope>
    <source>
        <strain>K12 / DH10B</strain>
    </source>
</reference>
<dbReference type="EC" id="3.6.5.n1" evidence="1"/>
<dbReference type="EMBL" id="CP000948">
    <property type="protein sequence ID" value="ACB03720.1"/>
    <property type="molecule type" value="Genomic_DNA"/>
</dbReference>
<dbReference type="RefSeq" id="WP_000790168.1">
    <property type="nucleotide sequence ID" value="NC_010473.1"/>
</dbReference>
<dbReference type="SMR" id="B1XB43"/>
<dbReference type="GeneID" id="93774522"/>
<dbReference type="KEGG" id="ecd:ECDH10B_2737"/>
<dbReference type="HOGENOM" id="CLU_009995_3_3_6"/>
<dbReference type="GO" id="GO:0005886">
    <property type="term" value="C:plasma membrane"/>
    <property type="evidence" value="ECO:0007669"/>
    <property type="project" value="UniProtKB-SubCell"/>
</dbReference>
<dbReference type="GO" id="GO:0005525">
    <property type="term" value="F:GTP binding"/>
    <property type="evidence" value="ECO:0007669"/>
    <property type="project" value="UniProtKB-UniRule"/>
</dbReference>
<dbReference type="GO" id="GO:0003924">
    <property type="term" value="F:GTPase activity"/>
    <property type="evidence" value="ECO:0007669"/>
    <property type="project" value="UniProtKB-UniRule"/>
</dbReference>
<dbReference type="GO" id="GO:0097216">
    <property type="term" value="F:guanosine tetraphosphate binding"/>
    <property type="evidence" value="ECO:0007669"/>
    <property type="project" value="UniProtKB-ARBA"/>
</dbReference>
<dbReference type="GO" id="GO:0043022">
    <property type="term" value="F:ribosome binding"/>
    <property type="evidence" value="ECO:0007669"/>
    <property type="project" value="UniProtKB-UniRule"/>
</dbReference>
<dbReference type="GO" id="GO:0003746">
    <property type="term" value="F:translation elongation factor activity"/>
    <property type="evidence" value="ECO:0007669"/>
    <property type="project" value="UniProtKB-UniRule"/>
</dbReference>
<dbReference type="GO" id="GO:0045727">
    <property type="term" value="P:positive regulation of translation"/>
    <property type="evidence" value="ECO:0007669"/>
    <property type="project" value="UniProtKB-UniRule"/>
</dbReference>
<dbReference type="CDD" id="cd03699">
    <property type="entry name" value="EF4_II"/>
    <property type="match status" value="1"/>
</dbReference>
<dbReference type="CDD" id="cd16260">
    <property type="entry name" value="EF4_III"/>
    <property type="match status" value="1"/>
</dbReference>
<dbReference type="CDD" id="cd01890">
    <property type="entry name" value="LepA"/>
    <property type="match status" value="1"/>
</dbReference>
<dbReference type="CDD" id="cd03709">
    <property type="entry name" value="lepA_C"/>
    <property type="match status" value="1"/>
</dbReference>
<dbReference type="FunFam" id="3.30.70.240:FF:000005">
    <property type="entry name" value="Elongation factor 4"/>
    <property type="match status" value="1"/>
</dbReference>
<dbReference type="FunFam" id="3.40.50.300:FF:000078">
    <property type="entry name" value="Elongation factor 4"/>
    <property type="match status" value="1"/>
</dbReference>
<dbReference type="FunFam" id="2.40.30.10:FF:000015">
    <property type="entry name" value="Translation factor GUF1, mitochondrial"/>
    <property type="match status" value="1"/>
</dbReference>
<dbReference type="FunFam" id="3.30.70.2570:FF:000001">
    <property type="entry name" value="Translation factor GUF1, mitochondrial"/>
    <property type="match status" value="1"/>
</dbReference>
<dbReference type="FunFam" id="3.30.70.870:FF:000004">
    <property type="entry name" value="Translation factor GUF1, mitochondrial"/>
    <property type="match status" value="1"/>
</dbReference>
<dbReference type="Gene3D" id="3.30.70.240">
    <property type="match status" value="1"/>
</dbReference>
<dbReference type="Gene3D" id="3.30.70.2570">
    <property type="entry name" value="Elongation factor 4, C-terminal domain"/>
    <property type="match status" value="1"/>
</dbReference>
<dbReference type="Gene3D" id="3.30.70.870">
    <property type="entry name" value="Elongation Factor G (Translational Gtpase), domain 3"/>
    <property type="match status" value="1"/>
</dbReference>
<dbReference type="Gene3D" id="3.40.50.300">
    <property type="entry name" value="P-loop containing nucleotide triphosphate hydrolases"/>
    <property type="match status" value="1"/>
</dbReference>
<dbReference type="Gene3D" id="2.40.30.10">
    <property type="entry name" value="Translation factors"/>
    <property type="match status" value="1"/>
</dbReference>
<dbReference type="HAMAP" id="MF_00071">
    <property type="entry name" value="LepA"/>
    <property type="match status" value="1"/>
</dbReference>
<dbReference type="InterPro" id="IPR006297">
    <property type="entry name" value="EF-4"/>
</dbReference>
<dbReference type="InterPro" id="IPR035647">
    <property type="entry name" value="EFG_III/V"/>
</dbReference>
<dbReference type="InterPro" id="IPR000640">
    <property type="entry name" value="EFG_V-like"/>
</dbReference>
<dbReference type="InterPro" id="IPR004161">
    <property type="entry name" value="EFTu-like_2"/>
</dbReference>
<dbReference type="InterPro" id="IPR031157">
    <property type="entry name" value="G_TR_CS"/>
</dbReference>
<dbReference type="InterPro" id="IPR038363">
    <property type="entry name" value="LepA_C_sf"/>
</dbReference>
<dbReference type="InterPro" id="IPR013842">
    <property type="entry name" value="LepA_CTD"/>
</dbReference>
<dbReference type="InterPro" id="IPR035654">
    <property type="entry name" value="LepA_IV"/>
</dbReference>
<dbReference type="InterPro" id="IPR027417">
    <property type="entry name" value="P-loop_NTPase"/>
</dbReference>
<dbReference type="InterPro" id="IPR005225">
    <property type="entry name" value="Small_GTP-bd"/>
</dbReference>
<dbReference type="InterPro" id="IPR000795">
    <property type="entry name" value="T_Tr_GTP-bd_dom"/>
</dbReference>
<dbReference type="NCBIfam" id="TIGR01393">
    <property type="entry name" value="lepA"/>
    <property type="match status" value="1"/>
</dbReference>
<dbReference type="NCBIfam" id="TIGR00231">
    <property type="entry name" value="small_GTP"/>
    <property type="match status" value="1"/>
</dbReference>
<dbReference type="PANTHER" id="PTHR43512:SF4">
    <property type="entry name" value="TRANSLATION FACTOR GUF1 HOMOLOG, CHLOROPLASTIC"/>
    <property type="match status" value="1"/>
</dbReference>
<dbReference type="PANTHER" id="PTHR43512">
    <property type="entry name" value="TRANSLATION FACTOR GUF1-RELATED"/>
    <property type="match status" value="1"/>
</dbReference>
<dbReference type="Pfam" id="PF00679">
    <property type="entry name" value="EFG_C"/>
    <property type="match status" value="1"/>
</dbReference>
<dbReference type="Pfam" id="PF00009">
    <property type="entry name" value="GTP_EFTU"/>
    <property type="match status" value="1"/>
</dbReference>
<dbReference type="Pfam" id="PF03144">
    <property type="entry name" value="GTP_EFTU_D2"/>
    <property type="match status" value="1"/>
</dbReference>
<dbReference type="Pfam" id="PF06421">
    <property type="entry name" value="LepA_C"/>
    <property type="match status" value="1"/>
</dbReference>
<dbReference type="PRINTS" id="PR00315">
    <property type="entry name" value="ELONGATNFCT"/>
</dbReference>
<dbReference type="SUPFAM" id="SSF54980">
    <property type="entry name" value="EF-G C-terminal domain-like"/>
    <property type="match status" value="2"/>
</dbReference>
<dbReference type="SUPFAM" id="SSF52540">
    <property type="entry name" value="P-loop containing nucleoside triphosphate hydrolases"/>
    <property type="match status" value="1"/>
</dbReference>
<dbReference type="PROSITE" id="PS00301">
    <property type="entry name" value="G_TR_1"/>
    <property type="match status" value="1"/>
</dbReference>
<dbReference type="PROSITE" id="PS51722">
    <property type="entry name" value="G_TR_2"/>
    <property type="match status" value="1"/>
</dbReference>
<name>LEPA_ECODH</name>
<feature type="chain" id="PRO_1000092396" description="Elongation factor 4">
    <location>
        <begin position="1"/>
        <end position="599"/>
    </location>
</feature>
<feature type="domain" description="tr-type G">
    <location>
        <begin position="2"/>
        <end position="184"/>
    </location>
</feature>
<feature type="binding site" evidence="1">
    <location>
        <begin position="14"/>
        <end position="19"/>
    </location>
    <ligand>
        <name>GTP</name>
        <dbReference type="ChEBI" id="CHEBI:37565"/>
    </ligand>
</feature>
<feature type="binding site" evidence="1">
    <location>
        <begin position="131"/>
        <end position="134"/>
    </location>
    <ligand>
        <name>GTP</name>
        <dbReference type="ChEBI" id="CHEBI:37565"/>
    </ligand>
</feature>
<sequence>MKNIRNFSIIAHIDHGKSTLSDRIIQICGGLSDREMEAQVLDSMDLERERGITIKAQSVTLDYKASDGETYQLNFIDTPGHVDFSYEVSRSLAACEGALLVVDAGQGVEAQTLANCYTAMEMDLEVVPVLNKIDLPAADPERVAEEIEDIVGIDATDAVRCSAKTGVGVQDVLERLVRDIPPPEGDPEGPLQALIIDSWFDNYLGVVSLIRIKNGTLRKGDKVKVMSTGQTYNADRLGIFTPKQVDRTELKCGEVGWLVCAIKDIHGAPVGDTLTLARNPAEKALPGFKKVKPQVYAGLFPVSSDDYEAFRDALGKLSLNDASLFYEPESSSALGFGFRCGFLGLLHMEIIQERLEREYDLDLITTAPTVVYEVETTSREVIYVDSPSKLPAVNNIYELREPIAECHMLLPQAYLGNVITLCVEKRGVQTNMVYHGNQVALTYEIPMAEVVLDFFDRLKSTSRGYASLDYNFKRFQASDMVRVDVLINGERVDALALITHRDNSQNRGRELVEKMKDLIPRQQFDIAIQAAIGTHIIARSTVKQLRKNVLAKCYGGDISRKKKLLQKQKEGKKRMKQIGNVELPQEAFLAILHVGKDNK</sequence>
<protein>
    <recommendedName>
        <fullName evidence="1">Elongation factor 4</fullName>
        <shortName evidence="1">EF-4</shortName>
        <ecNumber evidence="1">3.6.5.n1</ecNumber>
    </recommendedName>
    <alternativeName>
        <fullName evidence="1">Ribosomal back-translocase LepA</fullName>
    </alternativeName>
</protein>